<keyword id="KW-1185">Reference proteome</keyword>
<keyword id="KW-0687">Ribonucleoprotein</keyword>
<keyword id="KW-0689">Ribosomal protein</keyword>
<keyword id="KW-0694">RNA-binding</keyword>
<keyword id="KW-0699">rRNA-binding</keyword>
<protein>
    <recommendedName>
        <fullName evidence="1">Small ribosomal subunit protein uS19</fullName>
    </recommendedName>
    <alternativeName>
        <fullName evidence="2">30S ribosomal protein S19</fullName>
    </alternativeName>
</protein>
<accession>Q7MYF5</accession>
<evidence type="ECO:0000255" key="1">
    <source>
        <dbReference type="HAMAP-Rule" id="MF_00531"/>
    </source>
</evidence>
<evidence type="ECO:0000305" key="2"/>
<dbReference type="EMBL" id="BX571874">
    <property type="protein sequence ID" value="CAE17094.1"/>
    <property type="molecule type" value="Genomic_DNA"/>
</dbReference>
<dbReference type="RefSeq" id="WP_011148791.1">
    <property type="nucleotide sequence ID" value="NC_005126.1"/>
</dbReference>
<dbReference type="SMR" id="Q7MYF5"/>
<dbReference type="STRING" id="243265.plu4722"/>
<dbReference type="GeneID" id="97125513"/>
<dbReference type="KEGG" id="plu:plu4722"/>
<dbReference type="eggNOG" id="COG0185">
    <property type="taxonomic scope" value="Bacteria"/>
</dbReference>
<dbReference type="HOGENOM" id="CLU_144911_0_1_6"/>
<dbReference type="OrthoDB" id="9797833at2"/>
<dbReference type="Proteomes" id="UP000002514">
    <property type="component" value="Chromosome"/>
</dbReference>
<dbReference type="GO" id="GO:0005737">
    <property type="term" value="C:cytoplasm"/>
    <property type="evidence" value="ECO:0007669"/>
    <property type="project" value="UniProtKB-ARBA"/>
</dbReference>
<dbReference type="GO" id="GO:0015935">
    <property type="term" value="C:small ribosomal subunit"/>
    <property type="evidence" value="ECO:0007669"/>
    <property type="project" value="InterPro"/>
</dbReference>
<dbReference type="GO" id="GO:0019843">
    <property type="term" value="F:rRNA binding"/>
    <property type="evidence" value="ECO:0007669"/>
    <property type="project" value="UniProtKB-UniRule"/>
</dbReference>
<dbReference type="GO" id="GO:0003735">
    <property type="term" value="F:structural constituent of ribosome"/>
    <property type="evidence" value="ECO:0007669"/>
    <property type="project" value="InterPro"/>
</dbReference>
<dbReference type="GO" id="GO:0000028">
    <property type="term" value="P:ribosomal small subunit assembly"/>
    <property type="evidence" value="ECO:0007669"/>
    <property type="project" value="TreeGrafter"/>
</dbReference>
<dbReference type="GO" id="GO:0006412">
    <property type="term" value="P:translation"/>
    <property type="evidence" value="ECO:0007669"/>
    <property type="project" value="UniProtKB-UniRule"/>
</dbReference>
<dbReference type="FunFam" id="3.30.860.10:FF:000001">
    <property type="entry name" value="30S ribosomal protein S19"/>
    <property type="match status" value="1"/>
</dbReference>
<dbReference type="Gene3D" id="3.30.860.10">
    <property type="entry name" value="30s Ribosomal Protein S19, Chain A"/>
    <property type="match status" value="1"/>
</dbReference>
<dbReference type="HAMAP" id="MF_00531">
    <property type="entry name" value="Ribosomal_uS19"/>
    <property type="match status" value="1"/>
</dbReference>
<dbReference type="InterPro" id="IPR002222">
    <property type="entry name" value="Ribosomal_uS19"/>
</dbReference>
<dbReference type="InterPro" id="IPR005732">
    <property type="entry name" value="Ribosomal_uS19_bac-type"/>
</dbReference>
<dbReference type="InterPro" id="IPR020934">
    <property type="entry name" value="Ribosomal_uS19_CS"/>
</dbReference>
<dbReference type="InterPro" id="IPR023575">
    <property type="entry name" value="Ribosomal_uS19_SF"/>
</dbReference>
<dbReference type="NCBIfam" id="TIGR01050">
    <property type="entry name" value="rpsS_bact"/>
    <property type="match status" value="1"/>
</dbReference>
<dbReference type="PANTHER" id="PTHR11880">
    <property type="entry name" value="RIBOSOMAL PROTEIN S19P FAMILY MEMBER"/>
    <property type="match status" value="1"/>
</dbReference>
<dbReference type="PANTHER" id="PTHR11880:SF8">
    <property type="entry name" value="SMALL RIBOSOMAL SUBUNIT PROTEIN US19M"/>
    <property type="match status" value="1"/>
</dbReference>
<dbReference type="Pfam" id="PF00203">
    <property type="entry name" value="Ribosomal_S19"/>
    <property type="match status" value="1"/>
</dbReference>
<dbReference type="PIRSF" id="PIRSF002144">
    <property type="entry name" value="Ribosomal_S19"/>
    <property type="match status" value="1"/>
</dbReference>
<dbReference type="PRINTS" id="PR00975">
    <property type="entry name" value="RIBOSOMALS19"/>
</dbReference>
<dbReference type="SUPFAM" id="SSF54570">
    <property type="entry name" value="Ribosomal protein S19"/>
    <property type="match status" value="1"/>
</dbReference>
<dbReference type="PROSITE" id="PS00323">
    <property type="entry name" value="RIBOSOMAL_S19"/>
    <property type="match status" value="1"/>
</dbReference>
<comment type="function">
    <text evidence="1">Protein S19 forms a complex with S13 that binds strongly to the 16S ribosomal RNA.</text>
</comment>
<comment type="similarity">
    <text evidence="1">Belongs to the universal ribosomal protein uS19 family.</text>
</comment>
<organism>
    <name type="scientific">Photorhabdus laumondii subsp. laumondii (strain DSM 15139 / CIP 105565 / TT01)</name>
    <name type="common">Photorhabdus luminescens subsp. laumondii</name>
    <dbReference type="NCBI Taxonomy" id="243265"/>
    <lineage>
        <taxon>Bacteria</taxon>
        <taxon>Pseudomonadati</taxon>
        <taxon>Pseudomonadota</taxon>
        <taxon>Gammaproteobacteria</taxon>
        <taxon>Enterobacterales</taxon>
        <taxon>Morganellaceae</taxon>
        <taxon>Photorhabdus</taxon>
    </lineage>
</organism>
<sequence>MPRSLKKGPFIDLHLLKKVEKAVESGDKKPIKTWSRRSTIFPNMIGLTIAVHNGRQHVPVFVSDEMVGHKLGEFAPTRTYRGHAADKKAKKR</sequence>
<feature type="chain" id="PRO_0000129872" description="Small ribosomal subunit protein uS19">
    <location>
        <begin position="1"/>
        <end position="92"/>
    </location>
</feature>
<reference key="1">
    <citation type="journal article" date="2003" name="Nat. Biotechnol.">
        <title>The genome sequence of the entomopathogenic bacterium Photorhabdus luminescens.</title>
        <authorList>
            <person name="Duchaud E."/>
            <person name="Rusniok C."/>
            <person name="Frangeul L."/>
            <person name="Buchrieser C."/>
            <person name="Givaudan A."/>
            <person name="Taourit S."/>
            <person name="Bocs S."/>
            <person name="Boursaux-Eude C."/>
            <person name="Chandler M."/>
            <person name="Charles J.-F."/>
            <person name="Dassa E."/>
            <person name="Derose R."/>
            <person name="Derzelle S."/>
            <person name="Freyssinet G."/>
            <person name="Gaudriault S."/>
            <person name="Medigue C."/>
            <person name="Lanois A."/>
            <person name="Powell K."/>
            <person name="Siguier P."/>
            <person name="Vincent R."/>
            <person name="Wingate V."/>
            <person name="Zouine M."/>
            <person name="Glaser P."/>
            <person name="Boemare N."/>
            <person name="Danchin A."/>
            <person name="Kunst F."/>
        </authorList>
    </citation>
    <scope>NUCLEOTIDE SEQUENCE [LARGE SCALE GENOMIC DNA]</scope>
    <source>
        <strain>DSM 15139 / CIP 105565 / TT01</strain>
    </source>
</reference>
<name>RS19_PHOLL</name>
<gene>
    <name evidence="1" type="primary">rpsS</name>
    <name type="ordered locus">plu4722</name>
</gene>
<proteinExistence type="inferred from homology"/>